<evidence type="ECO:0000255" key="1">
    <source>
        <dbReference type="HAMAP-Rule" id="MF_00596"/>
    </source>
</evidence>
<dbReference type="EC" id="1.7.1.7" evidence="1"/>
<dbReference type="EMBL" id="CP001138">
    <property type="protein sequence ID" value="ACH52013.1"/>
    <property type="molecule type" value="Genomic_DNA"/>
</dbReference>
<dbReference type="RefSeq" id="WP_001217365.1">
    <property type="nucleotide sequence ID" value="NC_011149.1"/>
</dbReference>
<dbReference type="SMR" id="B5F7X8"/>
<dbReference type="KEGG" id="sea:SeAg_B0161"/>
<dbReference type="HOGENOM" id="CLU_022552_5_3_6"/>
<dbReference type="Proteomes" id="UP000008819">
    <property type="component" value="Chromosome"/>
</dbReference>
<dbReference type="GO" id="GO:0005829">
    <property type="term" value="C:cytosol"/>
    <property type="evidence" value="ECO:0007669"/>
    <property type="project" value="TreeGrafter"/>
</dbReference>
<dbReference type="GO" id="GO:1902560">
    <property type="term" value="C:GMP reductase complex"/>
    <property type="evidence" value="ECO:0007669"/>
    <property type="project" value="InterPro"/>
</dbReference>
<dbReference type="GO" id="GO:0003920">
    <property type="term" value="F:GMP reductase activity"/>
    <property type="evidence" value="ECO:0007669"/>
    <property type="project" value="UniProtKB-UniRule"/>
</dbReference>
<dbReference type="GO" id="GO:0046872">
    <property type="term" value="F:metal ion binding"/>
    <property type="evidence" value="ECO:0007669"/>
    <property type="project" value="UniProtKB-KW"/>
</dbReference>
<dbReference type="GO" id="GO:0006163">
    <property type="term" value="P:purine nucleotide metabolic process"/>
    <property type="evidence" value="ECO:0007669"/>
    <property type="project" value="UniProtKB-UniRule"/>
</dbReference>
<dbReference type="CDD" id="cd00381">
    <property type="entry name" value="IMPDH"/>
    <property type="match status" value="1"/>
</dbReference>
<dbReference type="FunFam" id="3.20.20.70:FF:000012">
    <property type="entry name" value="GMP reductase"/>
    <property type="match status" value="1"/>
</dbReference>
<dbReference type="Gene3D" id="3.20.20.70">
    <property type="entry name" value="Aldolase class I"/>
    <property type="match status" value="1"/>
</dbReference>
<dbReference type="HAMAP" id="MF_00596">
    <property type="entry name" value="GMP_reduct_type1"/>
    <property type="match status" value="1"/>
</dbReference>
<dbReference type="InterPro" id="IPR013785">
    <property type="entry name" value="Aldolase_TIM"/>
</dbReference>
<dbReference type="InterPro" id="IPR050139">
    <property type="entry name" value="GMP_reductase"/>
</dbReference>
<dbReference type="InterPro" id="IPR005993">
    <property type="entry name" value="GMPR"/>
</dbReference>
<dbReference type="InterPro" id="IPR015875">
    <property type="entry name" value="IMP_DH/GMP_Rdtase_CS"/>
</dbReference>
<dbReference type="InterPro" id="IPR001093">
    <property type="entry name" value="IMP_DH_GMPRt"/>
</dbReference>
<dbReference type="NCBIfam" id="TIGR01305">
    <property type="entry name" value="GMP_reduct_1"/>
    <property type="match status" value="1"/>
</dbReference>
<dbReference type="NCBIfam" id="NF003470">
    <property type="entry name" value="PRK05096.1"/>
    <property type="match status" value="1"/>
</dbReference>
<dbReference type="PANTHER" id="PTHR43170">
    <property type="entry name" value="GMP REDUCTASE"/>
    <property type="match status" value="1"/>
</dbReference>
<dbReference type="PANTHER" id="PTHR43170:SF5">
    <property type="entry name" value="GMP REDUCTASE"/>
    <property type="match status" value="1"/>
</dbReference>
<dbReference type="Pfam" id="PF00478">
    <property type="entry name" value="IMPDH"/>
    <property type="match status" value="1"/>
</dbReference>
<dbReference type="PIRSF" id="PIRSF000235">
    <property type="entry name" value="GMP_reductase"/>
    <property type="match status" value="1"/>
</dbReference>
<dbReference type="SMART" id="SM01240">
    <property type="entry name" value="IMPDH"/>
    <property type="match status" value="1"/>
</dbReference>
<dbReference type="SUPFAM" id="SSF51412">
    <property type="entry name" value="Inosine monophosphate dehydrogenase (IMPDH)"/>
    <property type="match status" value="1"/>
</dbReference>
<dbReference type="PROSITE" id="PS00487">
    <property type="entry name" value="IMP_DH_GMP_RED"/>
    <property type="match status" value="1"/>
</dbReference>
<proteinExistence type="inferred from homology"/>
<protein>
    <recommendedName>
        <fullName evidence="1">GMP reductase</fullName>
        <ecNumber evidence="1">1.7.1.7</ecNumber>
    </recommendedName>
    <alternativeName>
        <fullName evidence="1">Guanosine 5'-monophosphate oxidoreductase</fullName>
        <shortName evidence="1">Guanosine monophosphate reductase</shortName>
    </alternativeName>
</protein>
<sequence>MRIEEDLKLGFKDVLIRPKRSTLKSRSDVELERQFTFKHSGQTWSGVPIIAANMDTVGTFEMAQALAGFDILTAVHKHYTVEEWAAFINTASADVLKHVMVSTGTSDADFEKTVQILALNPALNFVCIDVANGYSEHFVQFVAKAREAWPTKTICAGNVVTGEMCEELILSGADIVKVGIGPGSVCTTRVKTGVGYPQLSAVIECADAAHGLGGMIVSDGGCTMPGDVAKAFGGGADFVMLGGMLAGHEESGGSVVEENGEKFMLFYGMSSESAMNRHVGGVAKYRAAEGKTVKLPLRGPVGNTARDILGGLRSACTYVGASRLKELTKRTTFIRVQEQENRIFNSL</sequence>
<organism>
    <name type="scientific">Salmonella agona (strain SL483)</name>
    <dbReference type="NCBI Taxonomy" id="454166"/>
    <lineage>
        <taxon>Bacteria</taxon>
        <taxon>Pseudomonadati</taxon>
        <taxon>Pseudomonadota</taxon>
        <taxon>Gammaproteobacteria</taxon>
        <taxon>Enterobacterales</taxon>
        <taxon>Enterobacteriaceae</taxon>
        <taxon>Salmonella</taxon>
    </lineage>
</organism>
<reference key="1">
    <citation type="journal article" date="2011" name="J. Bacteriol.">
        <title>Comparative genomics of 28 Salmonella enterica isolates: evidence for CRISPR-mediated adaptive sublineage evolution.</title>
        <authorList>
            <person name="Fricke W.F."/>
            <person name="Mammel M.K."/>
            <person name="McDermott P.F."/>
            <person name="Tartera C."/>
            <person name="White D.G."/>
            <person name="Leclerc J.E."/>
            <person name="Ravel J."/>
            <person name="Cebula T.A."/>
        </authorList>
    </citation>
    <scope>NUCLEOTIDE SEQUENCE [LARGE SCALE GENOMIC DNA]</scope>
    <source>
        <strain>SL483</strain>
    </source>
</reference>
<gene>
    <name evidence="1" type="primary">guaC</name>
    <name type="ordered locus">SeAg_B0161</name>
</gene>
<comment type="function">
    <text evidence="1">Catalyzes the irreversible NADPH-dependent deamination of GMP to IMP. It functions in the conversion of nucleobase, nucleoside and nucleotide derivatives of G to A nucleotides, and in maintaining the intracellular balance of A and G nucleotides.</text>
</comment>
<comment type="catalytic activity">
    <reaction evidence="1">
        <text>IMP + NH4(+) + NADP(+) = GMP + NADPH + 2 H(+)</text>
        <dbReference type="Rhea" id="RHEA:17185"/>
        <dbReference type="ChEBI" id="CHEBI:15378"/>
        <dbReference type="ChEBI" id="CHEBI:28938"/>
        <dbReference type="ChEBI" id="CHEBI:57783"/>
        <dbReference type="ChEBI" id="CHEBI:58053"/>
        <dbReference type="ChEBI" id="CHEBI:58115"/>
        <dbReference type="ChEBI" id="CHEBI:58349"/>
        <dbReference type="EC" id="1.7.1.7"/>
    </reaction>
</comment>
<comment type="subunit">
    <text evidence="1">Homotetramer.</text>
</comment>
<comment type="similarity">
    <text evidence="1">Belongs to the IMPDH/GMPR family. GuaC type 1 subfamily.</text>
</comment>
<name>GUAC_SALA4</name>
<keyword id="KW-0479">Metal-binding</keyword>
<keyword id="KW-0521">NADP</keyword>
<keyword id="KW-0560">Oxidoreductase</keyword>
<keyword id="KW-0630">Potassium</keyword>
<accession>B5F7X8</accession>
<feature type="chain" id="PRO_1000129860" description="GMP reductase">
    <location>
        <begin position="1"/>
        <end position="347"/>
    </location>
</feature>
<feature type="active site" description="Thioimidate intermediate" evidence="1">
    <location>
        <position position="186"/>
    </location>
</feature>
<feature type="binding site" evidence="1">
    <location>
        <begin position="108"/>
        <end position="131"/>
    </location>
    <ligand>
        <name>NADP(+)</name>
        <dbReference type="ChEBI" id="CHEBI:58349"/>
    </ligand>
</feature>
<feature type="binding site" evidence="1">
    <location>
        <position position="181"/>
    </location>
    <ligand>
        <name>K(+)</name>
        <dbReference type="ChEBI" id="CHEBI:29103"/>
    </ligand>
</feature>
<feature type="binding site" evidence="1">
    <location>
        <position position="183"/>
    </location>
    <ligand>
        <name>K(+)</name>
        <dbReference type="ChEBI" id="CHEBI:29103"/>
    </ligand>
</feature>
<feature type="binding site" evidence="1">
    <location>
        <begin position="216"/>
        <end position="239"/>
    </location>
    <ligand>
        <name>NADP(+)</name>
        <dbReference type="ChEBI" id="CHEBI:58349"/>
    </ligand>
</feature>